<name>HBA1_IGUIG</name>
<accession>P18974</accession>
<protein>
    <recommendedName>
        <fullName>Hemoglobin subunit alpha-1</fullName>
    </recommendedName>
    <alternativeName>
        <fullName>Alpha-1-globin</fullName>
    </alternativeName>
    <alternativeName>
        <fullName>Hemoglobin alpha-1 chain</fullName>
    </alternativeName>
</protein>
<sequence length="141" mass="15439">VLTEDDKNHIRAIWGHVDNNPEAFGVEALTRLFLAYPATKTYFAHFDLNPGSAQIKAHGKKVVDALTQAVNNLDDIPDALAKLADLHAEKLRVDPVNFGLLGHCILVTIAAHNHGPLKADVALSMDKFLTKVAKTLVAHYR</sequence>
<feature type="chain" id="PRO_0000052656" description="Hemoglobin subunit alpha-1">
    <location>
        <begin position="1"/>
        <end position="141"/>
    </location>
</feature>
<feature type="domain" description="Globin" evidence="1">
    <location>
        <begin position="1"/>
        <end position="141"/>
    </location>
</feature>
<feature type="binding site" evidence="1">
    <location>
        <position position="58"/>
    </location>
    <ligand>
        <name>O2</name>
        <dbReference type="ChEBI" id="CHEBI:15379"/>
    </ligand>
</feature>
<feature type="binding site" description="proximal binding residue" evidence="1">
    <location>
        <position position="87"/>
    </location>
    <ligand>
        <name>heme b</name>
        <dbReference type="ChEBI" id="CHEBI:60344"/>
    </ligand>
    <ligandPart>
        <name>Fe</name>
        <dbReference type="ChEBI" id="CHEBI:18248"/>
    </ligandPart>
</feature>
<organism>
    <name type="scientific">Iguana iguana</name>
    <name type="common">Common iguana</name>
    <dbReference type="NCBI Taxonomy" id="8517"/>
    <lineage>
        <taxon>Eukaryota</taxon>
        <taxon>Metazoa</taxon>
        <taxon>Chordata</taxon>
        <taxon>Craniata</taxon>
        <taxon>Vertebrata</taxon>
        <taxon>Euteleostomi</taxon>
        <taxon>Lepidosauria</taxon>
        <taxon>Squamata</taxon>
        <taxon>Bifurcata</taxon>
        <taxon>Unidentata</taxon>
        <taxon>Episquamata</taxon>
        <taxon>Toxicofera</taxon>
        <taxon>Iguania</taxon>
        <taxon>Iguanidae</taxon>
        <taxon>Iguaninae</taxon>
        <taxon>Iguana</taxon>
    </lineage>
</organism>
<evidence type="ECO:0000255" key="1">
    <source>
        <dbReference type="PROSITE-ProRule" id="PRU00238"/>
    </source>
</evidence>
<reference key="1">
    <citation type="journal article" date="1988" name="Biol. Chem. Hoppe-Seyler">
        <title>Hemoglobins of reptiles. The primary structures of the alpha I- and beta I-chains of common iguana (Iguana iguana) hemoglobin.</title>
        <authorList>
            <person name="Ruecknagel K.P."/>
            <person name="Braunitzer G."/>
            <person name="Wiesner H."/>
        </authorList>
    </citation>
    <scope>PROTEIN SEQUENCE</scope>
</reference>
<proteinExistence type="evidence at protein level"/>
<keyword id="KW-0903">Direct protein sequencing</keyword>
<keyword id="KW-0349">Heme</keyword>
<keyword id="KW-0408">Iron</keyword>
<keyword id="KW-0479">Metal-binding</keyword>
<keyword id="KW-0561">Oxygen transport</keyword>
<keyword id="KW-0813">Transport</keyword>
<dbReference type="PIR" id="S01664">
    <property type="entry name" value="HAIG1"/>
</dbReference>
<dbReference type="SMR" id="P18974"/>
<dbReference type="GO" id="GO:0072562">
    <property type="term" value="C:blood microparticle"/>
    <property type="evidence" value="ECO:0007669"/>
    <property type="project" value="TreeGrafter"/>
</dbReference>
<dbReference type="GO" id="GO:0031838">
    <property type="term" value="C:haptoglobin-hemoglobin complex"/>
    <property type="evidence" value="ECO:0007669"/>
    <property type="project" value="TreeGrafter"/>
</dbReference>
<dbReference type="GO" id="GO:0005833">
    <property type="term" value="C:hemoglobin complex"/>
    <property type="evidence" value="ECO:0007669"/>
    <property type="project" value="InterPro"/>
</dbReference>
<dbReference type="GO" id="GO:0031720">
    <property type="term" value="F:haptoglobin binding"/>
    <property type="evidence" value="ECO:0007669"/>
    <property type="project" value="TreeGrafter"/>
</dbReference>
<dbReference type="GO" id="GO:0020037">
    <property type="term" value="F:heme binding"/>
    <property type="evidence" value="ECO:0007669"/>
    <property type="project" value="InterPro"/>
</dbReference>
<dbReference type="GO" id="GO:0005506">
    <property type="term" value="F:iron ion binding"/>
    <property type="evidence" value="ECO:0007669"/>
    <property type="project" value="InterPro"/>
</dbReference>
<dbReference type="GO" id="GO:0043177">
    <property type="term" value="F:organic acid binding"/>
    <property type="evidence" value="ECO:0007669"/>
    <property type="project" value="TreeGrafter"/>
</dbReference>
<dbReference type="GO" id="GO:0019825">
    <property type="term" value="F:oxygen binding"/>
    <property type="evidence" value="ECO:0007669"/>
    <property type="project" value="InterPro"/>
</dbReference>
<dbReference type="GO" id="GO:0005344">
    <property type="term" value="F:oxygen carrier activity"/>
    <property type="evidence" value="ECO:0007669"/>
    <property type="project" value="UniProtKB-KW"/>
</dbReference>
<dbReference type="GO" id="GO:0004601">
    <property type="term" value="F:peroxidase activity"/>
    <property type="evidence" value="ECO:0007669"/>
    <property type="project" value="TreeGrafter"/>
</dbReference>
<dbReference type="GO" id="GO:0042744">
    <property type="term" value="P:hydrogen peroxide catabolic process"/>
    <property type="evidence" value="ECO:0007669"/>
    <property type="project" value="TreeGrafter"/>
</dbReference>
<dbReference type="CDD" id="cd08927">
    <property type="entry name" value="Hb-alpha-like"/>
    <property type="match status" value="1"/>
</dbReference>
<dbReference type="FunFam" id="1.10.490.10:FF:000002">
    <property type="entry name" value="Hemoglobin subunit alpha"/>
    <property type="match status" value="1"/>
</dbReference>
<dbReference type="Gene3D" id="1.10.490.10">
    <property type="entry name" value="Globins"/>
    <property type="match status" value="1"/>
</dbReference>
<dbReference type="InterPro" id="IPR000971">
    <property type="entry name" value="Globin"/>
</dbReference>
<dbReference type="InterPro" id="IPR009050">
    <property type="entry name" value="Globin-like_sf"/>
</dbReference>
<dbReference type="InterPro" id="IPR012292">
    <property type="entry name" value="Globin/Proto"/>
</dbReference>
<dbReference type="InterPro" id="IPR002338">
    <property type="entry name" value="Hemoglobin_a-typ"/>
</dbReference>
<dbReference type="InterPro" id="IPR050056">
    <property type="entry name" value="Hemoglobin_oxygen_transport"/>
</dbReference>
<dbReference type="InterPro" id="IPR002339">
    <property type="entry name" value="Hemoglobin_pi"/>
</dbReference>
<dbReference type="PANTHER" id="PTHR11442">
    <property type="entry name" value="HEMOGLOBIN FAMILY MEMBER"/>
    <property type="match status" value="1"/>
</dbReference>
<dbReference type="PANTHER" id="PTHR11442:SF48">
    <property type="entry name" value="HEMOGLOBIN SUBUNIT ALPHA"/>
    <property type="match status" value="1"/>
</dbReference>
<dbReference type="Pfam" id="PF00042">
    <property type="entry name" value="Globin"/>
    <property type="match status" value="1"/>
</dbReference>
<dbReference type="PRINTS" id="PR00612">
    <property type="entry name" value="ALPHAHAEM"/>
</dbReference>
<dbReference type="PRINTS" id="PR00815">
    <property type="entry name" value="PIHAEM"/>
</dbReference>
<dbReference type="SUPFAM" id="SSF46458">
    <property type="entry name" value="Globin-like"/>
    <property type="match status" value="1"/>
</dbReference>
<dbReference type="PROSITE" id="PS01033">
    <property type="entry name" value="GLOBIN"/>
    <property type="match status" value="1"/>
</dbReference>
<comment type="function">
    <text>Involved in oxygen transport from the lung to the various peripheral tissues.</text>
</comment>
<comment type="subunit">
    <text>Heterotetramer of two alpha chains and two beta chains.</text>
</comment>
<comment type="tissue specificity">
    <text>Red blood cells.</text>
</comment>
<comment type="similarity">
    <text evidence="1">Belongs to the globin family.</text>
</comment>